<evidence type="ECO:0000255" key="1"/>
<evidence type="ECO:0000305" key="2"/>
<sequence>MTLQHTRRIVKSLFILFIIVVCIYLLPRVAINAFYYPDNKVYGPTPAEAESITFTAKDGTHLHGWFIPTAFGRPENAVATVIHVHGNAGNMSAHWPLVSWLPERNVNLFMFDYRGFGESEGTPSQEGLLDDTKSAIDYVRHRADVNPERLVLLGQSLGGNNVLAAVGHCVGCANMRYADQAGIRAIILDSTFLSYSSIANQMIPGSGYLLDDRYSADRNIASVSPIPVLILHGTADHVIPWQDSEKLYALAREPKQKIFIPDGDHIDAFSGRYANLYRDAMIKFIQTALSAK</sequence>
<accession>Q8ZN39</accession>
<protein>
    <recommendedName>
        <fullName>Uncharacterized protein YfhR</fullName>
    </recommendedName>
</protein>
<organism>
    <name type="scientific">Salmonella typhimurium (strain LT2 / SGSC1412 / ATCC 700720)</name>
    <dbReference type="NCBI Taxonomy" id="99287"/>
    <lineage>
        <taxon>Bacteria</taxon>
        <taxon>Pseudomonadati</taxon>
        <taxon>Pseudomonadota</taxon>
        <taxon>Gammaproteobacteria</taxon>
        <taxon>Enterobacterales</taxon>
        <taxon>Enterobacteriaceae</taxon>
        <taxon>Salmonella</taxon>
    </lineage>
</organism>
<comment type="subcellular location">
    <subcellularLocation>
        <location evidence="2">Membrane</location>
        <topology evidence="2">Single-pass membrane protein</topology>
    </subcellularLocation>
</comment>
<comment type="similarity">
    <text evidence="2">Belongs to the serine esterase family.</text>
</comment>
<keyword id="KW-0472">Membrane</keyword>
<keyword id="KW-1185">Reference proteome</keyword>
<keyword id="KW-0812">Transmembrane</keyword>
<keyword id="KW-1133">Transmembrane helix</keyword>
<name>YFHR_SALTY</name>
<feature type="chain" id="PRO_0000169255" description="Uncharacterized protein YfhR">
    <location>
        <begin position="1"/>
        <end position="292"/>
    </location>
</feature>
<feature type="transmembrane region" description="Helical" evidence="1">
    <location>
        <begin position="13"/>
        <end position="35"/>
    </location>
</feature>
<dbReference type="EMBL" id="AE006468">
    <property type="protein sequence ID" value="AAL21441.1"/>
    <property type="molecule type" value="Genomic_DNA"/>
</dbReference>
<dbReference type="RefSeq" id="NP_461482.1">
    <property type="nucleotide sequence ID" value="NC_003197.2"/>
</dbReference>
<dbReference type="RefSeq" id="WP_000174944.1">
    <property type="nucleotide sequence ID" value="NC_003197.2"/>
</dbReference>
<dbReference type="SMR" id="Q8ZN39"/>
<dbReference type="STRING" id="99287.STM2547"/>
<dbReference type="ESTHER" id="salty-STM2547">
    <property type="family name" value="ABHD13-BEM46"/>
</dbReference>
<dbReference type="MEROPS" id="S09.A36"/>
<dbReference type="PaxDb" id="99287-STM2547"/>
<dbReference type="GeneID" id="1254069"/>
<dbReference type="KEGG" id="stm:STM2547"/>
<dbReference type="PATRIC" id="fig|99287.12.peg.2687"/>
<dbReference type="HOGENOM" id="CLU_029375_2_1_6"/>
<dbReference type="OMA" id="WLPEQGY"/>
<dbReference type="PhylomeDB" id="Q8ZN39"/>
<dbReference type="BioCyc" id="SENT99287:STM2547-MONOMER"/>
<dbReference type="Proteomes" id="UP000001014">
    <property type="component" value="Chromosome"/>
</dbReference>
<dbReference type="GO" id="GO:0016020">
    <property type="term" value="C:membrane"/>
    <property type="evidence" value="ECO:0007669"/>
    <property type="project" value="UniProtKB-SubCell"/>
</dbReference>
<dbReference type="Gene3D" id="3.40.50.1820">
    <property type="entry name" value="alpha/beta hydrolase"/>
    <property type="match status" value="1"/>
</dbReference>
<dbReference type="InterPro" id="IPR029058">
    <property type="entry name" value="AB_hydrolase_fold"/>
</dbReference>
<dbReference type="InterPro" id="IPR022742">
    <property type="entry name" value="Hydrolase_4"/>
</dbReference>
<dbReference type="PANTHER" id="PTHR12277">
    <property type="entry name" value="ALPHA/BETA HYDROLASE DOMAIN-CONTAINING PROTEIN"/>
    <property type="match status" value="1"/>
</dbReference>
<dbReference type="PANTHER" id="PTHR12277:SF81">
    <property type="entry name" value="PROTEIN ABHD13"/>
    <property type="match status" value="1"/>
</dbReference>
<dbReference type="Pfam" id="PF12146">
    <property type="entry name" value="Hydrolase_4"/>
    <property type="match status" value="1"/>
</dbReference>
<dbReference type="SUPFAM" id="SSF53474">
    <property type="entry name" value="alpha/beta-Hydrolases"/>
    <property type="match status" value="1"/>
</dbReference>
<proteinExistence type="inferred from homology"/>
<reference key="1">
    <citation type="journal article" date="2001" name="Nature">
        <title>Complete genome sequence of Salmonella enterica serovar Typhimurium LT2.</title>
        <authorList>
            <person name="McClelland M."/>
            <person name="Sanderson K.E."/>
            <person name="Spieth J."/>
            <person name="Clifton S.W."/>
            <person name="Latreille P."/>
            <person name="Courtney L."/>
            <person name="Porwollik S."/>
            <person name="Ali J."/>
            <person name="Dante M."/>
            <person name="Du F."/>
            <person name="Hou S."/>
            <person name="Layman D."/>
            <person name="Leonard S."/>
            <person name="Nguyen C."/>
            <person name="Scott K."/>
            <person name="Holmes A."/>
            <person name="Grewal N."/>
            <person name="Mulvaney E."/>
            <person name="Ryan E."/>
            <person name="Sun H."/>
            <person name="Florea L."/>
            <person name="Miller W."/>
            <person name="Stoneking T."/>
            <person name="Nhan M."/>
            <person name="Waterston R."/>
            <person name="Wilson R.K."/>
        </authorList>
    </citation>
    <scope>NUCLEOTIDE SEQUENCE [LARGE SCALE GENOMIC DNA]</scope>
    <source>
        <strain>LT2 / SGSC1412 / ATCC 700720</strain>
    </source>
</reference>
<gene>
    <name type="primary">yfhR</name>
    <name type="ordered locus">STM2547</name>
</gene>